<name>CCD47_PONAB</name>
<evidence type="ECO:0000250" key="1">
    <source>
        <dbReference type="UniProtKB" id="A0A8I3P7X4"/>
    </source>
</evidence>
<evidence type="ECO:0000250" key="2">
    <source>
        <dbReference type="UniProtKB" id="Q96A33"/>
    </source>
</evidence>
<evidence type="ECO:0000250" key="3">
    <source>
        <dbReference type="UniProtKB" id="Q9D024"/>
    </source>
</evidence>
<evidence type="ECO:0000255" key="4"/>
<evidence type="ECO:0000256" key="5">
    <source>
        <dbReference type="SAM" id="MobiDB-lite"/>
    </source>
</evidence>
<evidence type="ECO:0000305" key="6"/>
<reference key="1">
    <citation type="submission" date="2004-11" db="EMBL/GenBank/DDBJ databases">
        <authorList>
            <consortium name="The German cDNA consortium"/>
        </authorList>
    </citation>
    <scope>NUCLEOTIDE SEQUENCE [LARGE SCALE MRNA]</scope>
    <source>
        <tissue>Heart</tissue>
    </source>
</reference>
<accession>Q5RCI4</accession>
<comment type="function">
    <text evidence="1 2 3">Component of the multi-pass translocon (MPT) complex that mediates insertion of multi-pass membrane proteins into the lipid bilayer of membranes. The MPT complex takes over after the SEC61 complex: following membrane insertion of the first few transmembrane segments of proteins by the SEC61 complex, the MPT complex occludes the lateral gate of the SEC61 complex to promote insertion of subsequent transmembrane regions (By similarity). Within the MPT complex, the PAT subcomplex sequesters any highly polar regions in the transmembrane domains away from the non-polar membrane environment until they can be buried in the interior of the fully assembled protein. Within the PAT subcomplex, CCDC47 occludes the lateral gate of the SEC61 complex (By similarity). Involved in the regulation of calcium ion homeostasis in the ER. Required for proper protein degradation via the ERAD (ER-associated degradation) pathway (By similarity). Has an essential role in the maintenance of ER organization during embryogenesis (By similarity).</text>
</comment>
<comment type="subunit">
    <text evidence="2 3">Component of the PAT complex, composed of WDR83OS/Asterix and CCDC47. The PAT complex is part of the multi-pass translocon (MPT) complex, composed of three subcomplexes, the GEL complex (composed of RAB5IF/OPTI and TMCO1), the BOS complex (composed of NCLN/Nicalin, NOMO1 and TMEM147) and the PAT complex (composed of WDR83OS/Asterix and CCDC47). The MPT complex associates with the SEC61 complex (By similarity). Interacts with VCP, HSPA5, DERL1, DERL2 and SELENOS (By similarity).</text>
</comment>
<comment type="subcellular location">
    <subcellularLocation>
        <location evidence="2">Endoplasmic reticulum membrane</location>
        <topology evidence="4">Single-pass type I membrane protein</topology>
    </subcellularLocation>
    <subcellularLocation>
        <location evidence="3">Rough endoplasmic reticulum membrane</location>
        <topology evidence="4">Single-pass type I membrane protein</topology>
    </subcellularLocation>
</comment>
<comment type="similarity">
    <text evidence="6">Belongs to the CCDC47 family.</text>
</comment>
<comment type="sequence caution" evidence="6">
    <conflict type="frameshift">
        <sequence resource="EMBL-CDS" id="CAH90523"/>
    </conflict>
</comment>
<dbReference type="EMBL" id="CR858286">
    <property type="protein sequence ID" value="CAH90523.1"/>
    <property type="status" value="ALT_FRAME"/>
    <property type="molecule type" value="mRNA"/>
</dbReference>
<dbReference type="SMR" id="Q5RCI4"/>
<dbReference type="STRING" id="9601.ENSPPYP00000009581"/>
<dbReference type="GlyCosmos" id="Q5RCI4">
    <property type="glycosylation" value="1 site, No reported glycans"/>
</dbReference>
<dbReference type="eggNOG" id="KOG2357">
    <property type="taxonomic scope" value="Eukaryota"/>
</dbReference>
<dbReference type="InParanoid" id="Q5RCI4"/>
<dbReference type="Proteomes" id="UP000001595">
    <property type="component" value="Unplaced"/>
</dbReference>
<dbReference type="GO" id="GO:0160064">
    <property type="term" value="C:multi-pass translocon complex"/>
    <property type="evidence" value="ECO:0000250"/>
    <property type="project" value="UniProtKB"/>
</dbReference>
<dbReference type="GO" id="GO:0030867">
    <property type="term" value="C:rough endoplasmic reticulum membrane"/>
    <property type="evidence" value="ECO:0007669"/>
    <property type="project" value="UniProtKB-SubCell"/>
</dbReference>
<dbReference type="GO" id="GO:0005509">
    <property type="term" value="F:calcium ion binding"/>
    <property type="evidence" value="ECO:0007669"/>
    <property type="project" value="InterPro"/>
</dbReference>
<dbReference type="GO" id="GO:0032469">
    <property type="term" value="P:endoplasmic reticulum calcium ion homeostasis"/>
    <property type="evidence" value="ECO:0000250"/>
    <property type="project" value="UniProtKB"/>
</dbReference>
<dbReference type="GO" id="GO:0036503">
    <property type="term" value="P:ERAD pathway"/>
    <property type="evidence" value="ECO:0000250"/>
    <property type="project" value="UniProtKB"/>
</dbReference>
<dbReference type="GO" id="GO:0160063">
    <property type="term" value="P:multi-pass transmembrane protein insertion into ER membrane"/>
    <property type="evidence" value="ECO:0000250"/>
    <property type="project" value="UniProtKB"/>
</dbReference>
<dbReference type="InterPro" id="IPR012879">
    <property type="entry name" value="CCDC47"/>
</dbReference>
<dbReference type="PANTHER" id="PTHR12883">
    <property type="entry name" value="ADIPOCYTE-SPECIFIC PROTEIN 4-RELATED"/>
    <property type="match status" value="1"/>
</dbReference>
<dbReference type="PANTHER" id="PTHR12883:SF0">
    <property type="entry name" value="PAT COMPLEX SUBUNIT CCDC47"/>
    <property type="match status" value="1"/>
</dbReference>
<dbReference type="Pfam" id="PF07946">
    <property type="entry name" value="CCDC47"/>
    <property type="match status" value="1"/>
</dbReference>
<keyword id="KW-0175">Coiled coil</keyword>
<keyword id="KW-0256">Endoplasmic reticulum</keyword>
<keyword id="KW-0325">Glycoprotein</keyword>
<keyword id="KW-0472">Membrane</keyword>
<keyword id="KW-1185">Reference proteome</keyword>
<keyword id="KW-0732">Signal</keyword>
<keyword id="KW-0812">Transmembrane</keyword>
<keyword id="KW-1133">Transmembrane helix</keyword>
<feature type="signal peptide" evidence="4">
    <location>
        <begin position="1"/>
        <end position="20"/>
    </location>
</feature>
<feature type="chain" id="PRO_0000235800" description="PAT complex subunit CCDC47">
    <location>
        <begin position="21"/>
        <end position="483"/>
    </location>
</feature>
<feature type="topological domain" description="Cytoplasmic" evidence="1">
    <location>
        <begin position="21"/>
        <end position="135"/>
    </location>
</feature>
<feature type="transmembrane region" description="Helical" evidence="4">
    <location>
        <begin position="136"/>
        <end position="155"/>
    </location>
</feature>
<feature type="topological domain" description="Lumenal" evidence="1">
    <location>
        <begin position="156"/>
        <end position="483"/>
    </location>
</feature>
<feature type="region of interest" description="Disordered" evidence="5">
    <location>
        <begin position="46"/>
        <end position="118"/>
    </location>
</feature>
<feature type="region of interest" description="Disordered" evidence="5">
    <location>
        <begin position="424"/>
        <end position="483"/>
    </location>
</feature>
<feature type="coiled-coil region" evidence="4">
    <location>
        <begin position="451"/>
        <end position="481"/>
    </location>
</feature>
<feature type="compositionally biased region" description="Acidic residues" evidence="5">
    <location>
        <begin position="60"/>
        <end position="104"/>
    </location>
</feature>
<feature type="compositionally biased region" description="Basic and acidic residues" evidence="5">
    <location>
        <begin position="105"/>
        <end position="118"/>
    </location>
</feature>
<feature type="compositionally biased region" description="Basic and acidic residues" evidence="5">
    <location>
        <begin position="430"/>
        <end position="472"/>
    </location>
</feature>
<feature type="compositionally biased region" description="Basic residues" evidence="5">
    <location>
        <begin position="473"/>
        <end position="483"/>
    </location>
</feature>
<feature type="glycosylation site" description="N-linked (GlcNAc...) asparagine" evidence="4">
    <location>
        <position position="178"/>
    </location>
</feature>
<gene>
    <name type="primary">CCDC47</name>
</gene>
<sequence length="483" mass="55874">MKAFHTFCVVLLVFGSVSEAKFDDFEDEEDIVEYDDNDFAEFEDVMEDSVTESPQRVIITEDDEDETTVELEGQDENQEGDFEDADTQEGDTESEPYDDEEFEGYEDKPDTSSSKNKDPITIVDVPAHLQNSWESYYLEILMVTGLLAYIMNYIIGKNKNSRLAQAWFNTHRELLESNFTLVGDDGTNKEATSTGKLNQENEHIYNLWCSGRVCCEGMLIQLRFLKRQDLLNVLARMMRPVSDQVQIKVTMNDEDMETYVFAVGTRKALVRLQKEMQDLSEFCSDKPKSGAKYGLPDSLAILSEMGEVTDGMMDTKMVHFLTHYADKIESVHFSDQFSGPKIMQEEGQPLKLPDTKRTLLFTFNVPGSGNTYPKDMEALLPLMNMVIYSIDKAKKFRLNREGKQKADKNRARVEENFLKLTHVQRQEAAQSRREEKKRAEKERIMNEEDPEKQRRLEEAALRRDQKKLEKKQMKMKQIKVKAM</sequence>
<protein>
    <recommendedName>
        <fullName evidence="6">PAT complex subunit CCDC47</fullName>
    </recommendedName>
    <alternativeName>
        <fullName evidence="6">Coiled-coil domain-containing protein 47</fullName>
    </alternativeName>
</protein>
<proteinExistence type="evidence at transcript level"/>
<organism>
    <name type="scientific">Pongo abelii</name>
    <name type="common">Sumatran orangutan</name>
    <name type="synonym">Pongo pygmaeus abelii</name>
    <dbReference type="NCBI Taxonomy" id="9601"/>
    <lineage>
        <taxon>Eukaryota</taxon>
        <taxon>Metazoa</taxon>
        <taxon>Chordata</taxon>
        <taxon>Craniata</taxon>
        <taxon>Vertebrata</taxon>
        <taxon>Euteleostomi</taxon>
        <taxon>Mammalia</taxon>
        <taxon>Eutheria</taxon>
        <taxon>Euarchontoglires</taxon>
        <taxon>Primates</taxon>
        <taxon>Haplorrhini</taxon>
        <taxon>Catarrhini</taxon>
        <taxon>Hominidae</taxon>
        <taxon>Pongo</taxon>
    </lineage>
</organism>